<organism>
    <name type="scientific">Saccharomyces cerevisiae (strain ATCC 204508 / S288c)</name>
    <name type="common">Baker's yeast</name>
    <dbReference type="NCBI Taxonomy" id="559292"/>
    <lineage>
        <taxon>Eukaryota</taxon>
        <taxon>Fungi</taxon>
        <taxon>Dikarya</taxon>
        <taxon>Ascomycota</taxon>
        <taxon>Saccharomycotina</taxon>
        <taxon>Saccharomycetes</taxon>
        <taxon>Saccharomycetales</taxon>
        <taxon>Saccharomycetaceae</taxon>
        <taxon>Saccharomyces</taxon>
    </lineage>
</organism>
<accession>P33299</accession>
<accession>D6VX51</accession>
<sequence>MPPKEDWEKYKAPLEDDDKKPDDDKIVPLTEGDIQVLKSYGAAPYAAKLKQTENDLKDIEARIKEKAGVKESDTGLAPSHLWDIMGDRQRLGEEHPLQVARCTKIIKGNGESDETTTDNNNSGNSNSNSNQQSTDADEDDEDAKYVINLKQIAKFVVGLGERVSPTDIEEGMRVGVDRSKYNIELPLPPRIDPSVTMMTVEEKPDVTYSDVGGCKDQIEKLREVVELPLLSPERFATLGIDPPKGILLYGPPGTGKTLCARAVANRTDATFIRVIGSELVQKYVGEGARMVRELFEMARTKKACIIFFDEIDAVGGARFDDGAGGDNEVQRTMLELITQLDGFDPRGNIKVMFATNRPNTLDPALLRPGRIDRKVEFSLPDLEGRANIFRIHSKSMSVERGIRWELISRLCPNSTGAELRSVCTEAGMFAIRARRKVATEKDFLKAVDKVISGYKKFSSTSRYMQYN</sequence>
<name>PRS7_YEAST</name>
<gene>
    <name type="primary">RPT1</name>
    <name type="synonym">CIM5</name>
    <name type="synonym">YTA3</name>
    <name type="ordered locus">YKL145W</name>
</gene>
<proteinExistence type="evidence at protein level"/>
<dbReference type="EMBL" id="Z22817">
    <property type="protein sequence ID" value="CAA80470.1"/>
    <property type="molecule type" value="Genomic_DNA"/>
</dbReference>
<dbReference type="EMBL" id="X73571">
    <property type="protein sequence ID" value="CAA51973.1"/>
    <property type="molecule type" value="Genomic_DNA"/>
</dbReference>
<dbReference type="EMBL" id="Z28145">
    <property type="protein sequence ID" value="CAA81986.1"/>
    <property type="molecule type" value="Genomic_DNA"/>
</dbReference>
<dbReference type="EMBL" id="BK006944">
    <property type="protein sequence ID" value="DAA09017.1"/>
    <property type="molecule type" value="Genomic_DNA"/>
</dbReference>
<dbReference type="PIR" id="S34354">
    <property type="entry name" value="S34354"/>
</dbReference>
<dbReference type="RefSeq" id="NP_012777.1">
    <property type="nucleotide sequence ID" value="NM_001179711.1"/>
</dbReference>
<dbReference type="PDB" id="3JCO">
    <property type="method" value="EM"/>
    <property type="resolution" value="4.80 A"/>
    <property type="chains" value="H=1-467"/>
</dbReference>
<dbReference type="PDB" id="3JCP">
    <property type="method" value="EM"/>
    <property type="resolution" value="4.60 A"/>
    <property type="chains" value="H=1-467"/>
</dbReference>
<dbReference type="PDB" id="3VLF">
    <property type="method" value="X-ray"/>
    <property type="resolution" value="3.80 A"/>
    <property type="chains" value="B/D=381-467"/>
</dbReference>
<dbReference type="PDB" id="4A3V">
    <property type="method" value="X-ray"/>
    <property type="resolution" value="3.80 A"/>
    <property type="chains" value="B/D=378-467"/>
</dbReference>
<dbReference type="PDB" id="4CR2">
    <property type="method" value="EM"/>
    <property type="resolution" value="7.70 A"/>
    <property type="chains" value="H=1-467"/>
</dbReference>
<dbReference type="PDB" id="4CR3">
    <property type="method" value="EM"/>
    <property type="resolution" value="9.30 A"/>
    <property type="chains" value="H=1-467"/>
</dbReference>
<dbReference type="PDB" id="4CR4">
    <property type="method" value="EM"/>
    <property type="resolution" value="8.80 A"/>
    <property type="chains" value="H=1-467"/>
</dbReference>
<dbReference type="PDB" id="4JPO">
    <property type="method" value="X-ray"/>
    <property type="resolution" value="5.00 A"/>
    <property type="chains" value="C/D=379-467"/>
</dbReference>
<dbReference type="PDB" id="5A5B">
    <property type="method" value="EM"/>
    <property type="resolution" value="9.50 A"/>
    <property type="chains" value="H=1-467"/>
</dbReference>
<dbReference type="PDB" id="5MP9">
    <property type="method" value="EM"/>
    <property type="resolution" value="4.10 A"/>
    <property type="chains" value="H=1-467"/>
</dbReference>
<dbReference type="PDB" id="5MPA">
    <property type="method" value="EM"/>
    <property type="resolution" value="4.50 A"/>
    <property type="chains" value="H=1-467"/>
</dbReference>
<dbReference type="PDB" id="5MPB">
    <property type="method" value="EM"/>
    <property type="resolution" value="7.80 A"/>
    <property type="chains" value="H=1-467"/>
</dbReference>
<dbReference type="PDB" id="5MPC">
    <property type="method" value="EM"/>
    <property type="resolution" value="7.70 A"/>
    <property type="chains" value="H=1-467"/>
</dbReference>
<dbReference type="PDB" id="5WVI">
    <property type="method" value="EM"/>
    <property type="resolution" value="6.30 A"/>
    <property type="chains" value="H=1-467"/>
</dbReference>
<dbReference type="PDB" id="5WVK">
    <property type="method" value="EM"/>
    <property type="resolution" value="4.20 A"/>
    <property type="chains" value="H=1-467"/>
</dbReference>
<dbReference type="PDB" id="6EF0">
    <property type="method" value="EM"/>
    <property type="resolution" value="4.43 A"/>
    <property type="chains" value="H=201-457"/>
</dbReference>
<dbReference type="PDB" id="6EF1">
    <property type="method" value="EM"/>
    <property type="resolution" value="4.73 A"/>
    <property type="chains" value="H=194-455"/>
</dbReference>
<dbReference type="PDB" id="6EF2">
    <property type="method" value="EM"/>
    <property type="resolution" value="4.27 A"/>
    <property type="chains" value="H=194-466"/>
</dbReference>
<dbReference type="PDB" id="6EF3">
    <property type="method" value="EM"/>
    <property type="resolution" value="4.17 A"/>
    <property type="chains" value="H=1-467"/>
</dbReference>
<dbReference type="PDB" id="6FVT">
    <property type="method" value="EM"/>
    <property type="resolution" value="4.10 A"/>
    <property type="chains" value="H=42-467"/>
</dbReference>
<dbReference type="PDB" id="6FVU">
    <property type="method" value="EM"/>
    <property type="resolution" value="4.50 A"/>
    <property type="chains" value="H=42-467"/>
</dbReference>
<dbReference type="PDB" id="6FVV">
    <property type="method" value="EM"/>
    <property type="resolution" value="5.40 A"/>
    <property type="chains" value="H=42-458"/>
</dbReference>
<dbReference type="PDB" id="6FVW">
    <property type="method" value="EM"/>
    <property type="resolution" value="4.50 A"/>
    <property type="chains" value="H=42-467"/>
</dbReference>
<dbReference type="PDB" id="6FVX">
    <property type="method" value="EM"/>
    <property type="resolution" value="4.90 A"/>
    <property type="chains" value="H=42-467"/>
</dbReference>
<dbReference type="PDB" id="6FVY">
    <property type="method" value="EM"/>
    <property type="resolution" value="6.10 A"/>
    <property type="chains" value="H=42-467"/>
</dbReference>
<dbReference type="PDB" id="6J2C">
    <property type="method" value="EM"/>
    <property type="resolution" value="7.00 A"/>
    <property type="chains" value="H=1-467"/>
</dbReference>
<dbReference type="PDB" id="6J2N">
    <property type="method" value="EM"/>
    <property type="resolution" value="7.50 A"/>
    <property type="chains" value="H=1-467"/>
</dbReference>
<dbReference type="PDB" id="6J2Q">
    <property type="method" value="EM"/>
    <property type="resolution" value="3.80 A"/>
    <property type="chains" value="H=1-467"/>
</dbReference>
<dbReference type="PDB" id="6J2X">
    <property type="method" value="EM"/>
    <property type="resolution" value="3.80 A"/>
    <property type="chains" value="H=1-467"/>
</dbReference>
<dbReference type="PDB" id="6J30">
    <property type="method" value="EM"/>
    <property type="resolution" value="4.50 A"/>
    <property type="chains" value="H=1-467"/>
</dbReference>
<dbReference type="PDB" id="7QO4">
    <property type="method" value="EM"/>
    <property type="resolution" value="7.00 A"/>
    <property type="chains" value="H=1-467"/>
</dbReference>
<dbReference type="PDB" id="7QO5">
    <property type="method" value="EM"/>
    <property type="resolution" value="6.00 A"/>
    <property type="chains" value="H=1-467"/>
</dbReference>
<dbReference type="PDBsum" id="3JCO"/>
<dbReference type="PDBsum" id="3JCP"/>
<dbReference type="PDBsum" id="3VLF"/>
<dbReference type="PDBsum" id="4A3V"/>
<dbReference type="PDBsum" id="4CR2"/>
<dbReference type="PDBsum" id="4CR3"/>
<dbReference type="PDBsum" id="4CR4"/>
<dbReference type="PDBsum" id="4JPO"/>
<dbReference type="PDBsum" id="5A5B"/>
<dbReference type="PDBsum" id="5MP9"/>
<dbReference type="PDBsum" id="5MPA"/>
<dbReference type="PDBsum" id="5MPB"/>
<dbReference type="PDBsum" id="5MPC"/>
<dbReference type="PDBsum" id="5WVI"/>
<dbReference type="PDBsum" id="5WVK"/>
<dbReference type="PDBsum" id="6EF0"/>
<dbReference type="PDBsum" id="6EF1"/>
<dbReference type="PDBsum" id="6EF2"/>
<dbReference type="PDBsum" id="6EF3"/>
<dbReference type="PDBsum" id="6FVT"/>
<dbReference type="PDBsum" id="6FVU"/>
<dbReference type="PDBsum" id="6FVV"/>
<dbReference type="PDBsum" id="6FVW"/>
<dbReference type="PDBsum" id="6FVX"/>
<dbReference type="PDBsum" id="6FVY"/>
<dbReference type="PDBsum" id="6J2C"/>
<dbReference type="PDBsum" id="6J2N"/>
<dbReference type="PDBsum" id="6J2Q"/>
<dbReference type="PDBsum" id="6J2X"/>
<dbReference type="PDBsum" id="6J30"/>
<dbReference type="PDBsum" id="7QO4"/>
<dbReference type="PDBsum" id="7QO5"/>
<dbReference type="EMDB" id="EMD-14084"/>
<dbReference type="EMDB" id="EMD-3534"/>
<dbReference type="EMDB" id="EMD-3535"/>
<dbReference type="EMDB" id="EMD-3536"/>
<dbReference type="EMDB" id="EMD-3537"/>
<dbReference type="EMDB" id="EMD-4321"/>
<dbReference type="EMDB" id="EMD-4322"/>
<dbReference type="EMDB" id="EMD-4323"/>
<dbReference type="EMDB" id="EMD-4324"/>
<dbReference type="EMDB" id="EMD-6693"/>
<dbReference type="EMDB" id="EMD-6694"/>
<dbReference type="EMDB" id="EMD-9042"/>
<dbReference type="EMDB" id="EMD-9043"/>
<dbReference type="EMDB" id="EMD-9044"/>
<dbReference type="EMDB" id="EMD-9045"/>
<dbReference type="EMDB" id="EMD-9769"/>
<dbReference type="EMDB" id="EMD-9770"/>
<dbReference type="EMDB" id="EMD-9771"/>
<dbReference type="EMDB" id="EMD-9772"/>
<dbReference type="EMDB" id="EMD-9773"/>
<dbReference type="SMR" id="P33299"/>
<dbReference type="BioGRID" id="33991">
    <property type="interactions" value="674"/>
</dbReference>
<dbReference type="ComplexPortal" id="CPX-2262">
    <property type="entry name" value="26S proteasome complex"/>
</dbReference>
<dbReference type="DIP" id="DIP-2883N"/>
<dbReference type="FunCoup" id="P33299">
    <property type="interactions" value="1346"/>
</dbReference>
<dbReference type="IntAct" id="P33299">
    <property type="interactions" value="105"/>
</dbReference>
<dbReference type="MINT" id="P33299"/>
<dbReference type="STRING" id="4932.YKL145W"/>
<dbReference type="iPTMnet" id="P33299"/>
<dbReference type="PaxDb" id="4932-YKL145W"/>
<dbReference type="PeptideAtlas" id="P33299"/>
<dbReference type="EnsemblFungi" id="YKL145W_mRNA">
    <property type="protein sequence ID" value="YKL145W"/>
    <property type="gene ID" value="YKL145W"/>
</dbReference>
<dbReference type="GeneID" id="853712"/>
<dbReference type="KEGG" id="sce:YKL145W"/>
<dbReference type="AGR" id="SGD:S000001628"/>
<dbReference type="SGD" id="S000001628">
    <property type="gene designation" value="RPT1"/>
</dbReference>
<dbReference type="VEuPathDB" id="FungiDB:YKL145W"/>
<dbReference type="eggNOG" id="KOG0729">
    <property type="taxonomic scope" value="Eukaryota"/>
</dbReference>
<dbReference type="GeneTree" id="ENSGT01020000230346"/>
<dbReference type="HOGENOM" id="CLU_000688_6_0_1"/>
<dbReference type="InParanoid" id="P33299"/>
<dbReference type="OMA" id="RSKYHIE"/>
<dbReference type="OrthoDB" id="1937997at2759"/>
<dbReference type="BioCyc" id="YEAST:G3O-31920-MONOMER"/>
<dbReference type="BRENDA" id="5.6.1.5">
    <property type="organism ID" value="984"/>
</dbReference>
<dbReference type="Reactome" id="R-SCE-1236978">
    <property type="pathway name" value="Cross-presentation of soluble exogenous antigens (endosomes)"/>
</dbReference>
<dbReference type="Reactome" id="R-SCE-5668541">
    <property type="pathway name" value="TNFR2 non-canonical NF-kB pathway"/>
</dbReference>
<dbReference type="Reactome" id="R-SCE-5687128">
    <property type="pathway name" value="MAPK6/MAPK4 signaling"/>
</dbReference>
<dbReference type="Reactome" id="R-SCE-5689880">
    <property type="pathway name" value="Ub-specific processing proteases"/>
</dbReference>
<dbReference type="Reactome" id="R-SCE-6798695">
    <property type="pathway name" value="Neutrophil degranulation"/>
</dbReference>
<dbReference type="Reactome" id="R-SCE-68949">
    <property type="pathway name" value="Orc1 removal from chromatin"/>
</dbReference>
<dbReference type="Reactome" id="R-SCE-69017">
    <property type="pathway name" value="CDK-mediated phosphorylation and removal of Cdc6"/>
</dbReference>
<dbReference type="Reactome" id="R-SCE-69601">
    <property type="pathway name" value="Ubiquitin Mediated Degradation of Phosphorylated Cdc25A"/>
</dbReference>
<dbReference type="Reactome" id="R-SCE-8854050">
    <property type="pathway name" value="FBXL7 down-regulates AURKA during mitotic entry and in early mitosis"/>
</dbReference>
<dbReference type="Reactome" id="R-SCE-8948751">
    <property type="pathway name" value="Regulation of PTEN stability and activity"/>
</dbReference>
<dbReference type="Reactome" id="R-SCE-8951664">
    <property type="pathway name" value="Neddylation"/>
</dbReference>
<dbReference type="Reactome" id="R-SCE-9755511">
    <property type="pathway name" value="KEAP1-NFE2L2 pathway"/>
</dbReference>
<dbReference type="Reactome" id="R-SCE-983168">
    <property type="pathway name" value="Antigen processing: Ubiquitination &amp; Proteasome degradation"/>
</dbReference>
<dbReference type="Reactome" id="R-SCE-9907900">
    <property type="pathway name" value="Proteasome assembly"/>
</dbReference>
<dbReference type="BioGRID-ORCS" id="853712">
    <property type="hits" value="3 hits in 10 CRISPR screens"/>
</dbReference>
<dbReference type="EvolutionaryTrace" id="P33299"/>
<dbReference type="PRO" id="PR:P33299"/>
<dbReference type="Proteomes" id="UP000002311">
    <property type="component" value="Chromosome XI"/>
</dbReference>
<dbReference type="RNAct" id="P33299">
    <property type="molecule type" value="protein"/>
</dbReference>
<dbReference type="GO" id="GO:0005737">
    <property type="term" value="C:cytoplasm"/>
    <property type="evidence" value="ECO:0007669"/>
    <property type="project" value="UniProtKB-SubCell"/>
</dbReference>
<dbReference type="GO" id="GO:0005634">
    <property type="term" value="C:nucleus"/>
    <property type="evidence" value="ECO:0007669"/>
    <property type="project" value="UniProtKB-SubCell"/>
</dbReference>
<dbReference type="GO" id="GO:0000502">
    <property type="term" value="C:proteasome complex"/>
    <property type="evidence" value="ECO:0000353"/>
    <property type="project" value="ComplexPortal"/>
</dbReference>
<dbReference type="GO" id="GO:0008540">
    <property type="term" value="C:proteasome regulatory particle, base subcomplex"/>
    <property type="evidence" value="ECO:0000314"/>
    <property type="project" value="SGD"/>
</dbReference>
<dbReference type="GO" id="GO:0005524">
    <property type="term" value="F:ATP binding"/>
    <property type="evidence" value="ECO:0007669"/>
    <property type="project" value="UniProtKB-KW"/>
</dbReference>
<dbReference type="GO" id="GO:0016887">
    <property type="term" value="F:ATP hydrolysis activity"/>
    <property type="evidence" value="ECO:0000250"/>
    <property type="project" value="SGD"/>
</dbReference>
<dbReference type="GO" id="GO:0036402">
    <property type="term" value="F:proteasome-activating activity"/>
    <property type="evidence" value="ECO:0000318"/>
    <property type="project" value="GO_Central"/>
</dbReference>
<dbReference type="GO" id="GO:0031625">
    <property type="term" value="F:ubiquitin protein ligase binding"/>
    <property type="evidence" value="ECO:0000353"/>
    <property type="project" value="SGD"/>
</dbReference>
<dbReference type="GO" id="GO:0045732">
    <property type="term" value="P:positive regulation of protein catabolic process"/>
    <property type="evidence" value="ECO:0000314"/>
    <property type="project" value="SGD"/>
</dbReference>
<dbReference type="GO" id="GO:0045899">
    <property type="term" value="P:positive regulation of RNA polymerase II transcription preinitiation complex assembly"/>
    <property type="evidence" value="ECO:0000315"/>
    <property type="project" value="SGD"/>
</dbReference>
<dbReference type="GO" id="GO:0070682">
    <property type="term" value="P:proteasome regulatory particle assembly"/>
    <property type="evidence" value="ECO:0000315"/>
    <property type="project" value="SGD"/>
</dbReference>
<dbReference type="GO" id="GO:0043161">
    <property type="term" value="P:proteasome-mediated ubiquitin-dependent protein catabolic process"/>
    <property type="evidence" value="ECO:0000314"/>
    <property type="project" value="ComplexPortal"/>
</dbReference>
<dbReference type="GO" id="GO:0006511">
    <property type="term" value="P:ubiquitin-dependent protein catabolic process"/>
    <property type="evidence" value="ECO:0000353"/>
    <property type="project" value="SGD"/>
</dbReference>
<dbReference type="CDD" id="cd19502">
    <property type="entry name" value="RecA-like_PAN_like"/>
    <property type="match status" value="1"/>
</dbReference>
<dbReference type="FunFam" id="1.10.8.60:FF:000005">
    <property type="entry name" value="26S protease regulatory subunit 7"/>
    <property type="match status" value="1"/>
</dbReference>
<dbReference type="FunFam" id="3.40.50.300:FF:000027">
    <property type="entry name" value="26S protease regulatory subunit 7"/>
    <property type="match status" value="1"/>
</dbReference>
<dbReference type="FunFam" id="2.40.50.140:FF:000329">
    <property type="entry name" value="26S protease subunit component"/>
    <property type="match status" value="1"/>
</dbReference>
<dbReference type="Gene3D" id="1.10.8.60">
    <property type="match status" value="1"/>
</dbReference>
<dbReference type="Gene3D" id="2.40.50.140">
    <property type="entry name" value="Nucleic acid-binding proteins"/>
    <property type="match status" value="1"/>
</dbReference>
<dbReference type="Gene3D" id="3.40.50.300">
    <property type="entry name" value="P-loop containing nucleotide triphosphate hydrolases"/>
    <property type="match status" value="1"/>
</dbReference>
<dbReference type="InterPro" id="IPR050221">
    <property type="entry name" value="26S_Proteasome_ATPase"/>
</dbReference>
<dbReference type="InterPro" id="IPR003593">
    <property type="entry name" value="AAA+_ATPase"/>
</dbReference>
<dbReference type="InterPro" id="IPR041569">
    <property type="entry name" value="AAA_lid_3"/>
</dbReference>
<dbReference type="InterPro" id="IPR003959">
    <property type="entry name" value="ATPase_AAA_core"/>
</dbReference>
<dbReference type="InterPro" id="IPR003960">
    <property type="entry name" value="ATPase_AAA_CS"/>
</dbReference>
<dbReference type="InterPro" id="IPR012340">
    <property type="entry name" value="NA-bd_OB-fold"/>
</dbReference>
<dbReference type="InterPro" id="IPR027417">
    <property type="entry name" value="P-loop_NTPase"/>
</dbReference>
<dbReference type="InterPro" id="IPR048723">
    <property type="entry name" value="PRS7-like_OB"/>
</dbReference>
<dbReference type="PANTHER" id="PTHR23073">
    <property type="entry name" value="26S PROTEASOME REGULATORY SUBUNIT"/>
    <property type="match status" value="1"/>
</dbReference>
<dbReference type="Pfam" id="PF00004">
    <property type="entry name" value="AAA"/>
    <property type="match status" value="1"/>
</dbReference>
<dbReference type="Pfam" id="PF17862">
    <property type="entry name" value="AAA_lid_3"/>
    <property type="match status" value="1"/>
</dbReference>
<dbReference type="Pfam" id="PF21236">
    <property type="entry name" value="PRS7_OB"/>
    <property type="match status" value="1"/>
</dbReference>
<dbReference type="SMART" id="SM00382">
    <property type="entry name" value="AAA"/>
    <property type="match status" value="1"/>
</dbReference>
<dbReference type="SUPFAM" id="SSF52540">
    <property type="entry name" value="P-loop containing nucleoside triphosphate hydrolases"/>
    <property type="match status" value="1"/>
</dbReference>
<dbReference type="PROSITE" id="PS00674">
    <property type="entry name" value="AAA"/>
    <property type="match status" value="1"/>
</dbReference>
<comment type="function">
    <text evidence="1">The 26S proteasome is involved in the ATP-dependent degradation of ubiquitinated proteins. The regulatory (or ATPase) complex confers ATP dependency and substrate specificity to the 26S complex (By similarity).</text>
</comment>
<comment type="subunit">
    <text evidence="4 5">Interacts with UBR1 and CIC1.</text>
</comment>
<comment type="interaction">
    <interactant intactId="EBI-13910">
        <id>P33299</id>
    </interactant>
    <interactant intactId="EBI-6174">
        <id>P48510</id>
        <label>DSK2</label>
    </interactant>
    <organismsDiffer>false</organismsDiffer>
    <experiments>3</experiments>
</comment>
<comment type="interaction">
    <interactant intactId="EBI-13910">
        <id>P33299</id>
    </interactant>
    <interactant intactId="EBI-21152">
        <id>P38348</id>
        <label>HSM3</label>
    </interactant>
    <organismsDiffer>false</organismsDiffer>
    <experiments>11</experiments>
</comment>
<comment type="interaction">
    <interactant intactId="EBI-13910">
        <id>P33299</id>
    </interactant>
    <interactant intactId="EBI-13988">
        <id>P22141</id>
        <label>PRE1</label>
    </interactant>
    <organismsDiffer>false</organismsDiffer>
    <experiments>3</experiments>
</comment>
<comment type="interaction">
    <interactant intactId="EBI-13910">
        <id>P33299</id>
    </interactant>
    <interactant intactId="EBI-14668">
        <id>P32628</id>
        <label>RAD23</label>
    </interactant>
    <organismsDiffer>false</organismsDiffer>
    <experiments>8</experiments>
</comment>
<comment type="interaction">
    <interactant intactId="EBI-13910">
        <id>P33299</id>
    </interactant>
    <interactant intactId="EBI-15913">
        <id>P38764</id>
        <label>RPN1</label>
    </interactant>
    <organismsDiffer>false</organismsDiffer>
    <experiments>15</experiments>
</comment>
<comment type="interaction">
    <interactant intactId="EBI-13910">
        <id>P33299</id>
    </interactant>
    <interactant intactId="EBI-11219">
        <id>P43588</id>
        <label>RPN11</label>
    </interactant>
    <organismsDiffer>false</organismsDiffer>
    <experiments>4</experiments>
</comment>
<comment type="interaction">
    <interactant intactId="EBI-13910">
        <id>P33299</id>
    </interactant>
    <interactant intactId="EBI-23691">
        <id>P53196</id>
        <label>RPN14</label>
    </interactant>
    <organismsDiffer>false</organismsDiffer>
    <experiments>9</experiments>
</comment>
<comment type="interaction">
    <interactant intactId="EBI-13910">
        <id>P33299</id>
    </interactant>
    <interactant intactId="EBI-13901">
        <id>P40327</id>
        <label>RPT2</label>
    </interactant>
    <organismsDiffer>false</organismsDiffer>
    <experiments>10</experiments>
</comment>
<comment type="interaction">
    <interactant intactId="EBI-13910">
        <id>P33299</id>
    </interactant>
    <interactant intactId="EBI-13905">
        <id>P33298</id>
        <label>RPT3</label>
    </interactant>
    <organismsDiffer>false</organismsDiffer>
    <experiments>7</experiments>
</comment>
<comment type="interaction">
    <interactant intactId="EBI-13910">
        <id>P33299</id>
    </interactant>
    <interactant intactId="EBI-18520">
        <id>P53549</id>
        <label>RPT4</label>
    </interactant>
    <organismsDiffer>false</organismsDiffer>
    <experiments>7</experiments>
</comment>
<comment type="interaction">
    <interactant intactId="EBI-13910">
        <id>P33299</id>
    </interactant>
    <interactant intactId="EBI-13920">
        <id>P33297</id>
        <label>RPT5</label>
    </interactant>
    <organismsDiffer>false</organismsDiffer>
    <experiments>6</experiments>
</comment>
<comment type="interaction">
    <interactant intactId="EBI-13910">
        <id>P33299</id>
    </interactant>
    <interactant intactId="EBI-13914">
        <id>Q01939</id>
        <label>RPT6</label>
    </interactant>
    <organismsDiffer>false</organismsDiffer>
    <experiments>8</experiments>
</comment>
<comment type="interaction">
    <interactant intactId="EBI-13910">
        <id>P33299</id>
    </interactant>
    <interactant intactId="EBI-31337">
        <id>O94742</id>
        <label>SEM1</label>
    </interactant>
    <organismsDiffer>false</organismsDiffer>
    <experiments>2</experiments>
</comment>
<comment type="interaction">
    <interactant intactId="EBI-13910">
        <id>P33299</id>
    </interactant>
    <interactant intactId="EBI-19909">
        <id>P19812</id>
        <label>UBR1</label>
    </interactant>
    <organismsDiffer>false</organismsDiffer>
    <experiments>2</experiments>
</comment>
<comment type="subcellular location">
    <subcellularLocation>
        <location evidence="8">Cytoplasm</location>
    </subcellularLocation>
    <subcellularLocation>
        <location evidence="6">Nucleus</location>
    </subcellularLocation>
</comment>
<comment type="PTM">
    <text>The N-terminus is blocked.</text>
</comment>
<comment type="miscellaneous">
    <text evidence="7">Present with 105 molecules/cell in log phase SD medium.</text>
</comment>
<comment type="similarity">
    <text evidence="8">Belongs to the AAA ATPase family.</text>
</comment>
<evidence type="ECO:0000250" key="1"/>
<evidence type="ECO:0000255" key="2"/>
<evidence type="ECO:0000256" key="3">
    <source>
        <dbReference type="SAM" id="MobiDB-lite"/>
    </source>
</evidence>
<evidence type="ECO:0000269" key="4">
    <source>
    </source>
</evidence>
<evidence type="ECO:0000269" key="5">
    <source>
    </source>
</evidence>
<evidence type="ECO:0000269" key="6">
    <source>
    </source>
</evidence>
<evidence type="ECO:0000269" key="7">
    <source>
    </source>
</evidence>
<evidence type="ECO:0000305" key="8"/>
<evidence type="ECO:0007744" key="9">
    <source>
    </source>
</evidence>
<feature type="chain" id="PRO_0000084719" description="26S proteasome regulatory subunit 7 homolog">
    <location>
        <begin position="1"/>
        <end position="467"/>
    </location>
</feature>
<feature type="region of interest" description="Disordered" evidence="3">
    <location>
        <begin position="1"/>
        <end position="26"/>
    </location>
</feature>
<feature type="region of interest" description="Disordered" evidence="3">
    <location>
        <begin position="108"/>
        <end position="140"/>
    </location>
</feature>
<feature type="compositionally biased region" description="Low complexity" evidence="3">
    <location>
        <begin position="117"/>
        <end position="134"/>
    </location>
</feature>
<feature type="binding site" evidence="2">
    <location>
        <begin position="250"/>
        <end position="257"/>
    </location>
    <ligand>
        <name>ATP</name>
        <dbReference type="ChEBI" id="CHEBI:30616"/>
    </ligand>
</feature>
<feature type="modified residue" description="Phosphoserine" evidence="9">
    <location>
        <position position="164"/>
    </location>
</feature>
<feature type="modified residue" description="Phosphoserine" evidence="9">
    <location>
        <position position="231"/>
    </location>
</feature>
<keyword id="KW-0002">3D-structure</keyword>
<keyword id="KW-0067">ATP-binding</keyword>
<keyword id="KW-0963">Cytoplasm</keyword>
<keyword id="KW-0547">Nucleotide-binding</keyword>
<keyword id="KW-0539">Nucleus</keyword>
<keyword id="KW-0597">Phosphoprotein</keyword>
<keyword id="KW-0647">Proteasome</keyword>
<keyword id="KW-1185">Reference proteome</keyword>
<reference key="1">
    <citation type="journal article" date="1993" name="Nature">
        <title>S. cerevisiae 26S protease mutants arrest cell division in G2/metaphase.</title>
        <authorList>
            <person name="Ghislain M."/>
            <person name="Udvardy A."/>
            <person name="Mann C."/>
        </authorList>
    </citation>
    <scope>NUCLEOTIDE SEQUENCE [GENOMIC DNA]</scope>
    <source>
        <strain>ATCC 28383 / FL100 / VTT C-80102</strain>
    </source>
</reference>
<reference key="2">
    <citation type="journal article" date="1994" name="Yeast">
        <title>Identification of a set of yeast genes coding for a novel family of putative ATPases with high similarity to constituents of the 26S protease complex.</title>
        <authorList>
            <person name="Schnall R."/>
            <person name="Mannhaupt G."/>
            <person name="Stucka R."/>
            <person name="Tauer R."/>
            <person name="Ehnle S."/>
            <person name="Schwarzlose C."/>
            <person name="Vetter I."/>
            <person name="Feldmann H."/>
        </authorList>
    </citation>
    <scope>NUCLEOTIDE SEQUENCE [GENOMIC DNA]</scope>
    <source>
        <strain>C836</strain>
    </source>
</reference>
<reference key="3">
    <citation type="journal article" date="1994" name="Nature">
        <title>Complete DNA sequence of yeast chromosome XI.</title>
        <authorList>
            <person name="Dujon B."/>
            <person name="Alexandraki D."/>
            <person name="Andre B."/>
            <person name="Ansorge W."/>
            <person name="Baladron V."/>
            <person name="Ballesta J.P.G."/>
            <person name="Banrevi A."/>
            <person name="Bolle P.-A."/>
            <person name="Bolotin-Fukuhara M."/>
            <person name="Bossier P."/>
            <person name="Bou G."/>
            <person name="Boyer J."/>
            <person name="Buitrago M.J."/>
            <person name="Cheret G."/>
            <person name="Colleaux L."/>
            <person name="Daignan-Fornier B."/>
            <person name="del Rey F."/>
            <person name="Dion C."/>
            <person name="Domdey H."/>
            <person name="Duesterhoeft A."/>
            <person name="Duesterhus S."/>
            <person name="Entian K.-D."/>
            <person name="Erfle H."/>
            <person name="Esteban P.F."/>
            <person name="Feldmann H."/>
            <person name="Fernandes L."/>
            <person name="Fobo G.M."/>
            <person name="Fritz C."/>
            <person name="Fukuhara H."/>
            <person name="Gabel C."/>
            <person name="Gaillon L."/>
            <person name="Garcia-Cantalejo J.M."/>
            <person name="Garcia-Ramirez J.J."/>
            <person name="Gent M.E."/>
            <person name="Ghazvini M."/>
            <person name="Goffeau A."/>
            <person name="Gonzalez A."/>
            <person name="Grothues D."/>
            <person name="Guerreiro P."/>
            <person name="Hegemann J.H."/>
            <person name="Hewitt N."/>
            <person name="Hilger F."/>
            <person name="Hollenberg C.P."/>
            <person name="Horaitis O."/>
            <person name="Indge K.J."/>
            <person name="Jacquier A."/>
            <person name="James C.M."/>
            <person name="Jauniaux J.-C."/>
            <person name="Jimenez A."/>
            <person name="Keuchel H."/>
            <person name="Kirchrath L."/>
            <person name="Kleine K."/>
            <person name="Koetter P."/>
            <person name="Legrain P."/>
            <person name="Liebl S."/>
            <person name="Louis E.J."/>
            <person name="Maia e Silva A."/>
            <person name="Marck C."/>
            <person name="Monnier A.-L."/>
            <person name="Moestl D."/>
            <person name="Mueller S."/>
            <person name="Obermaier B."/>
            <person name="Oliver S.G."/>
            <person name="Pallier C."/>
            <person name="Pascolo S."/>
            <person name="Pfeiffer F."/>
            <person name="Philippsen P."/>
            <person name="Planta R.J."/>
            <person name="Pohl F.M."/>
            <person name="Pohl T.M."/>
            <person name="Poehlmann R."/>
            <person name="Portetelle D."/>
            <person name="Purnelle B."/>
            <person name="Puzos V."/>
            <person name="Ramezani Rad M."/>
            <person name="Rasmussen S.W."/>
            <person name="Remacha M.A."/>
            <person name="Revuelta J.L."/>
            <person name="Richard G.-F."/>
            <person name="Rieger M."/>
            <person name="Rodrigues-Pousada C."/>
            <person name="Rose M."/>
            <person name="Rupp T."/>
            <person name="Santos M.A."/>
            <person name="Schwager C."/>
            <person name="Sensen C."/>
            <person name="Skala J."/>
            <person name="Soares H."/>
            <person name="Sor F."/>
            <person name="Stegemann J."/>
            <person name="Tettelin H."/>
            <person name="Thierry A."/>
            <person name="Tzermia M."/>
            <person name="Urrestarazu L.A."/>
            <person name="van Dyck L."/>
            <person name="van Vliet-Reedijk J.C."/>
            <person name="Valens M."/>
            <person name="Vandenbol M."/>
            <person name="Vilela C."/>
            <person name="Vissers S."/>
            <person name="von Wettstein D."/>
            <person name="Voss H."/>
            <person name="Wiemann S."/>
            <person name="Xu G."/>
            <person name="Zimmermann J."/>
            <person name="Haasemann M."/>
            <person name="Becker I."/>
            <person name="Mewes H.-W."/>
        </authorList>
    </citation>
    <scope>NUCLEOTIDE SEQUENCE [LARGE SCALE GENOMIC DNA]</scope>
    <source>
        <strain>ATCC 204508 / S288c</strain>
    </source>
</reference>
<reference key="4">
    <citation type="journal article" date="2014" name="G3 (Bethesda)">
        <title>The reference genome sequence of Saccharomyces cerevisiae: Then and now.</title>
        <authorList>
            <person name="Engel S.R."/>
            <person name="Dietrich F.S."/>
            <person name="Fisk D.G."/>
            <person name="Binkley G."/>
            <person name="Balakrishnan R."/>
            <person name="Costanzo M.C."/>
            <person name="Dwight S.S."/>
            <person name="Hitz B.C."/>
            <person name="Karra K."/>
            <person name="Nash R.S."/>
            <person name="Weng S."/>
            <person name="Wong E.D."/>
            <person name="Lloyd P."/>
            <person name="Skrzypek M.S."/>
            <person name="Miyasato S.R."/>
            <person name="Simison M."/>
            <person name="Cherry J.M."/>
        </authorList>
    </citation>
    <scope>GENOME REANNOTATION</scope>
    <source>
        <strain>ATCC 204508 / S288c</strain>
    </source>
</reference>
<reference key="5">
    <citation type="journal article" date="2000" name="Proc. Natl. Acad. Sci. U.S.A.">
        <title>Physical association of ubiquitin ligases and the 26S proteasome.</title>
        <authorList>
            <person name="Xie Y."/>
            <person name="Varshavsky A."/>
        </authorList>
    </citation>
    <scope>INTERACTION WITH UBR1</scope>
</reference>
<reference key="6">
    <citation type="journal article" date="2001" name="EMBO J.">
        <title>Cic1, an adaptor protein specifically linking the 26S proteasome to its substrate, the SCF component Cdc4.</title>
        <authorList>
            <person name="Jaeger S."/>
            <person name="Strayle J."/>
            <person name="Heinemeyer W."/>
            <person name="Wolf D.H."/>
        </authorList>
    </citation>
    <scope>INTERACTION WITH CIC1</scope>
</reference>
<reference key="7">
    <citation type="journal article" date="2003" name="Arch. Biochem. Biophys.">
        <title>N-terminal modifications of the 19S regulatory particle subunits of the yeast proteasome.</title>
        <authorList>
            <person name="Kimura Y."/>
            <person name="Saeki Y."/>
            <person name="Yokosawa H."/>
            <person name="Polevoda B."/>
            <person name="Sherman F."/>
            <person name="Hirano H."/>
        </authorList>
    </citation>
    <scope>BLOCKAGE OF N-TERMINUS</scope>
</reference>
<reference key="8">
    <citation type="journal article" date="2003" name="Nature">
        <title>Global analysis of protein localization in budding yeast.</title>
        <authorList>
            <person name="Huh W.-K."/>
            <person name="Falvo J.V."/>
            <person name="Gerke L.C."/>
            <person name="Carroll A.S."/>
            <person name="Howson R.W."/>
            <person name="Weissman J.S."/>
            <person name="O'Shea E.K."/>
        </authorList>
    </citation>
    <scope>SUBCELLULAR LOCATION [LARGE SCALE ANALYSIS]</scope>
</reference>
<reference key="9">
    <citation type="journal article" date="2003" name="Nature">
        <title>Global analysis of protein expression in yeast.</title>
        <authorList>
            <person name="Ghaemmaghami S."/>
            <person name="Huh W.-K."/>
            <person name="Bower K."/>
            <person name="Howson R.W."/>
            <person name="Belle A."/>
            <person name="Dephoure N."/>
            <person name="O'Shea E.K."/>
            <person name="Weissman J.S."/>
        </authorList>
    </citation>
    <scope>LEVEL OF PROTEIN EXPRESSION [LARGE SCALE ANALYSIS]</scope>
</reference>
<reference key="10">
    <citation type="journal article" date="2008" name="Mol. Cell. Proteomics">
        <title>A multidimensional chromatography technology for in-depth phosphoproteome analysis.</title>
        <authorList>
            <person name="Albuquerque C.P."/>
            <person name="Smolka M.B."/>
            <person name="Payne S.H."/>
            <person name="Bafna V."/>
            <person name="Eng J."/>
            <person name="Zhou H."/>
        </authorList>
    </citation>
    <scope>PHOSPHORYLATION [LARGE SCALE ANALYSIS] AT SER-164 AND SER-231</scope>
    <scope>IDENTIFICATION BY MASS SPECTROMETRY [LARGE SCALE ANALYSIS]</scope>
</reference>
<reference key="11">
    <citation type="journal article" date="2012" name="Proc. Natl. Acad. Sci. U.S.A.">
        <title>Near-atomic resolution structural model of the yeast 26S proteasome.</title>
        <authorList>
            <person name="Beck F."/>
            <person name="Unverdorben P."/>
            <person name="Bohn S."/>
            <person name="Schweitzer A."/>
            <person name="Pfeifer G."/>
            <person name="Sakata E."/>
            <person name="Nickell S."/>
            <person name="Plitzko J.M."/>
            <person name="Villa E."/>
            <person name="Baumeister W."/>
            <person name="Forster F."/>
        </authorList>
    </citation>
    <scope>STRUCTURE BY ELECTRON MICROSCOPY (7.4 ANGSTROMS) OF THE 26S PROTEASOME</scope>
</reference>
<protein>
    <recommendedName>
        <fullName>26S proteasome regulatory subunit 7 homolog</fullName>
    </recommendedName>
    <alternativeName>
        <fullName>Protein CIM5</fullName>
    </alternativeName>
    <alternativeName>
        <fullName>Tat-binding homolog 3</fullName>
    </alternativeName>
</protein>